<evidence type="ECO:0000250" key="1">
    <source>
        <dbReference type="UniProtKB" id="Q9D6T1"/>
    </source>
</evidence>
<evidence type="ECO:0000255" key="2"/>
<evidence type="ECO:0000269" key="3">
    <source>
    </source>
</evidence>
<evidence type="ECO:0000305" key="4"/>
<feature type="chain" id="PRO_0000048486" description="Tubulin epsilon chain">
    <location>
        <begin position="1"/>
        <end position="475"/>
    </location>
</feature>
<feature type="binding site" evidence="2">
    <location>
        <begin position="148"/>
        <end position="154"/>
    </location>
    <ligand>
        <name>GTP</name>
        <dbReference type="ChEBI" id="CHEBI:37565"/>
    </ligand>
</feature>
<feature type="sequence conflict" description="In Ref. 4; AAH31101." evidence="4" ref="4">
    <original>D</original>
    <variation>G</variation>
    <location>
        <position position="91"/>
    </location>
</feature>
<feature type="sequence conflict" description="In Ref. 4; AAH31101." evidence="4" ref="4">
    <original>P</original>
    <variation>R</variation>
    <location>
        <position position="469"/>
    </location>
</feature>
<dbReference type="EMBL" id="AF201334">
    <property type="protein sequence ID" value="AAF09585.1"/>
    <property type="molecule type" value="mRNA"/>
</dbReference>
<dbReference type="EMBL" id="Z99289">
    <property type="status" value="NOT_ANNOTATED_CDS"/>
    <property type="molecule type" value="Genomic_DNA"/>
</dbReference>
<dbReference type="EMBL" id="CH471051">
    <property type="protein sequence ID" value="EAW48272.1"/>
    <property type="molecule type" value="Genomic_DNA"/>
</dbReference>
<dbReference type="EMBL" id="BC025405">
    <property type="protein sequence ID" value="AAH25405.1"/>
    <property type="molecule type" value="mRNA"/>
</dbReference>
<dbReference type="EMBL" id="BC031101">
    <property type="protein sequence ID" value="AAH31101.1"/>
    <property type="molecule type" value="mRNA"/>
</dbReference>
<dbReference type="CCDS" id="CCDS5100.1"/>
<dbReference type="RefSeq" id="NP_057346.1">
    <property type="nucleotide sequence ID" value="NM_016262.5"/>
</dbReference>
<dbReference type="EMDB" id="EMD-15118"/>
<dbReference type="EMDB" id="EMD-15119"/>
<dbReference type="EMDB" id="EMD-15120"/>
<dbReference type="EMDB" id="EMD-25158"/>
<dbReference type="EMDB" id="EMD-25161"/>
<dbReference type="SMR" id="Q9UJT0"/>
<dbReference type="BioGRID" id="119353">
    <property type="interactions" value="21"/>
</dbReference>
<dbReference type="FunCoup" id="Q9UJT0">
    <property type="interactions" value="743"/>
</dbReference>
<dbReference type="IntAct" id="Q9UJT0">
    <property type="interactions" value="9"/>
</dbReference>
<dbReference type="STRING" id="9606.ENSP00000357651"/>
<dbReference type="DrugBank" id="DB00570">
    <property type="generic name" value="Vinblastine"/>
</dbReference>
<dbReference type="GlyConnect" id="1863">
    <property type="glycosylation" value="7 N-Linked glycans (1 site)"/>
</dbReference>
<dbReference type="GlyCosmos" id="Q9UJT0">
    <property type="glycosylation" value="1 site, 6 glycans"/>
</dbReference>
<dbReference type="GlyGen" id="Q9UJT0">
    <property type="glycosylation" value="1 site, 6 N-linked glycans (1 site)"/>
</dbReference>
<dbReference type="iPTMnet" id="Q9UJT0"/>
<dbReference type="PhosphoSitePlus" id="Q9UJT0"/>
<dbReference type="BioMuta" id="TUBE1"/>
<dbReference type="DMDM" id="8928405"/>
<dbReference type="jPOST" id="Q9UJT0"/>
<dbReference type="MassIVE" id="Q9UJT0"/>
<dbReference type="PaxDb" id="9606-ENSP00000357651"/>
<dbReference type="PeptideAtlas" id="Q9UJT0"/>
<dbReference type="ProteomicsDB" id="84643"/>
<dbReference type="Pumba" id="Q9UJT0"/>
<dbReference type="Antibodypedia" id="19362">
    <property type="antibodies" value="191 antibodies from 24 providers"/>
</dbReference>
<dbReference type="DNASU" id="51175"/>
<dbReference type="Ensembl" id="ENST00000368662.10">
    <property type="protein sequence ID" value="ENSP00000357651.5"/>
    <property type="gene ID" value="ENSG00000074935.14"/>
</dbReference>
<dbReference type="GeneID" id="51175"/>
<dbReference type="KEGG" id="hsa:51175"/>
<dbReference type="MANE-Select" id="ENST00000368662.10">
    <property type="protein sequence ID" value="ENSP00000357651.5"/>
    <property type="RefSeq nucleotide sequence ID" value="NM_016262.5"/>
    <property type="RefSeq protein sequence ID" value="NP_057346.1"/>
</dbReference>
<dbReference type="UCSC" id="uc003pvq.4">
    <property type="organism name" value="human"/>
</dbReference>
<dbReference type="AGR" id="HGNC:20775"/>
<dbReference type="CTD" id="51175"/>
<dbReference type="DisGeNET" id="51175"/>
<dbReference type="GeneCards" id="TUBE1"/>
<dbReference type="HGNC" id="HGNC:20775">
    <property type="gene designation" value="TUBE1"/>
</dbReference>
<dbReference type="HPA" id="ENSG00000074935">
    <property type="expression patterns" value="Low tissue specificity"/>
</dbReference>
<dbReference type="MIM" id="607345">
    <property type="type" value="gene"/>
</dbReference>
<dbReference type="neXtProt" id="NX_Q9UJT0"/>
<dbReference type="OpenTargets" id="ENSG00000074935"/>
<dbReference type="PharmGKB" id="PA134936770"/>
<dbReference type="VEuPathDB" id="HostDB:ENSG00000074935"/>
<dbReference type="eggNOG" id="KOG1375">
    <property type="taxonomic scope" value="Eukaryota"/>
</dbReference>
<dbReference type="GeneTree" id="ENSGT00940000155723"/>
<dbReference type="HOGENOM" id="CLU_015718_1_0_1"/>
<dbReference type="InParanoid" id="Q9UJT0"/>
<dbReference type="OMA" id="KRAHLHH"/>
<dbReference type="OrthoDB" id="1662883at2759"/>
<dbReference type="PAN-GO" id="Q9UJT0">
    <property type="GO annotations" value="6 GO annotations based on evolutionary models"/>
</dbReference>
<dbReference type="PhylomeDB" id="Q9UJT0"/>
<dbReference type="TreeFam" id="TF330882"/>
<dbReference type="PathwayCommons" id="Q9UJT0"/>
<dbReference type="SignaLink" id="Q9UJT0"/>
<dbReference type="SIGNOR" id="Q9UJT0"/>
<dbReference type="BioGRID-ORCS" id="51175">
    <property type="hits" value="337 hits in 1169 CRISPR screens"/>
</dbReference>
<dbReference type="CD-CODE" id="8C2F96ED">
    <property type="entry name" value="Centrosome"/>
</dbReference>
<dbReference type="ChiTaRS" id="TUBE1">
    <property type="organism name" value="human"/>
</dbReference>
<dbReference type="GeneWiki" id="TUBE1"/>
<dbReference type="GenomeRNAi" id="51175"/>
<dbReference type="Pharos" id="Q9UJT0">
    <property type="development level" value="Tbio"/>
</dbReference>
<dbReference type="PRO" id="PR:Q9UJT0"/>
<dbReference type="Proteomes" id="UP000005640">
    <property type="component" value="Chromosome 6"/>
</dbReference>
<dbReference type="RNAct" id="Q9UJT0">
    <property type="molecule type" value="protein"/>
</dbReference>
<dbReference type="Bgee" id="ENSG00000074935">
    <property type="expression patterns" value="Expressed in right hemisphere of cerebellum and 184 other cell types or tissues"/>
</dbReference>
<dbReference type="ExpressionAtlas" id="Q9UJT0">
    <property type="expression patterns" value="baseline and differential"/>
</dbReference>
<dbReference type="GO" id="GO:0005737">
    <property type="term" value="C:cytoplasm"/>
    <property type="evidence" value="ECO:0000318"/>
    <property type="project" value="GO_Central"/>
</dbReference>
<dbReference type="GO" id="GO:0005874">
    <property type="term" value="C:microtubule"/>
    <property type="evidence" value="ECO:0000318"/>
    <property type="project" value="GO_Central"/>
</dbReference>
<dbReference type="GO" id="GO:0000242">
    <property type="term" value="C:pericentriolar material"/>
    <property type="evidence" value="ECO:0000304"/>
    <property type="project" value="ProtInc"/>
</dbReference>
<dbReference type="GO" id="GO:0005525">
    <property type="term" value="F:GTP binding"/>
    <property type="evidence" value="ECO:0000318"/>
    <property type="project" value="GO_Central"/>
</dbReference>
<dbReference type="GO" id="GO:0005200">
    <property type="term" value="F:structural constituent of cytoskeleton"/>
    <property type="evidence" value="ECO:0000318"/>
    <property type="project" value="GO_Central"/>
</dbReference>
<dbReference type="GO" id="GO:0007098">
    <property type="term" value="P:centrosome cycle"/>
    <property type="evidence" value="ECO:0000304"/>
    <property type="project" value="ProtInc"/>
</dbReference>
<dbReference type="GO" id="GO:0000226">
    <property type="term" value="P:microtubule cytoskeleton organization"/>
    <property type="evidence" value="ECO:0000318"/>
    <property type="project" value="GO_Central"/>
</dbReference>
<dbReference type="GO" id="GO:0000278">
    <property type="term" value="P:mitotic cell cycle"/>
    <property type="evidence" value="ECO:0000318"/>
    <property type="project" value="GO_Central"/>
</dbReference>
<dbReference type="CDD" id="cd02190">
    <property type="entry name" value="epsilon_tubulin"/>
    <property type="match status" value="1"/>
</dbReference>
<dbReference type="FunFam" id="3.40.50.1440:FF:000017">
    <property type="entry name" value="Tubulin epsilon chain"/>
    <property type="match status" value="1"/>
</dbReference>
<dbReference type="FunFam" id="1.10.287.600:FF:000007">
    <property type="entry name" value="tubulin epsilon chain"/>
    <property type="match status" value="1"/>
</dbReference>
<dbReference type="FunFam" id="3.30.1330.20:FF:000036">
    <property type="entry name" value="Uncharacterized protein"/>
    <property type="match status" value="1"/>
</dbReference>
<dbReference type="Gene3D" id="1.10.287.600">
    <property type="entry name" value="Helix hairpin bin"/>
    <property type="match status" value="1"/>
</dbReference>
<dbReference type="Gene3D" id="3.40.50.1440">
    <property type="entry name" value="Tubulin/FtsZ, GTPase domain"/>
    <property type="match status" value="1"/>
</dbReference>
<dbReference type="InterPro" id="IPR004057">
    <property type="entry name" value="Epsilon_tubulin"/>
</dbReference>
<dbReference type="InterPro" id="IPR008280">
    <property type="entry name" value="Tub_FtsZ_C"/>
</dbReference>
<dbReference type="InterPro" id="IPR000217">
    <property type="entry name" value="Tubulin"/>
</dbReference>
<dbReference type="InterPro" id="IPR018316">
    <property type="entry name" value="Tubulin/FtsZ_2-layer-sand-dom"/>
</dbReference>
<dbReference type="InterPro" id="IPR036525">
    <property type="entry name" value="Tubulin/FtsZ_GTPase_sf"/>
</dbReference>
<dbReference type="InterPro" id="IPR023123">
    <property type="entry name" value="Tubulin_C"/>
</dbReference>
<dbReference type="InterPro" id="IPR017975">
    <property type="entry name" value="Tubulin_CS"/>
</dbReference>
<dbReference type="InterPro" id="IPR003008">
    <property type="entry name" value="Tubulin_FtsZ_GTPase"/>
</dbReference>
<dbReference type="PANTHER" id="PTHR11588">
    <property type="entry name" value="TUBULIN"/>
    <property type="match status" value="1"/>
</dbReference>
<dbReference type="Pfam" id="PF00091">
    <property type="entry name" value="Tubulin"/>
    <property type="match status" value="1"/>
</dbReference>
<dbReference type="Pfam" id="PF03953">
    <property type="entry name" value="Tubulin_C"/>
    <property type="match status" value="1"/>
</dbReference>
<dbReference type="PRINTS" id="PR01519">
    <property type="entry name" value="EPSLNTUBULIN"/>
</dbReference>
<dbReference type="PRINTS" id="PR01161">
    <property type="entry name" value="TUBULIN"/>
</dbReference>
<dbReference type="SMART" id="SM00864">
    <property type="entry name" value="Tubulin"/>
    <property type="match status" value="1"/>
</dbReference>
<dbReference type="SMART" id="SM00865">
    <property type="entry name" value="Tubulin_C"/>
    <property type="match status" value="1"/>
</dbReference>
<dbReference type="SUPFAM" id="SSF55307">
    <property type="entry name" value="Tubulin C-terminal domain-like"/>
    <property type="match status" value="1"/>
</dbReference>
<dbReference type="SUPFAM" id="SSF52490">
    <property type="entry name" value="Tubulin nucleotide-binding domain-like"/>
    <property type="match status" value="1"/>
</dbReference>
<dbReference type="PROSITE" id="PS00227">
    <property type="entry name" value="TUBULIN"/>
    <property type="match status" value="1"/>
</dbReference>
<protein>
    <recommendedName>
        <fullName>Tubulin epsilon chain</fullName>
    </recommendedName>
    <alternativeName>
        <fullName>Epsilon-tubulin</fullName>
    </alternativeName>
</protein>
<proteinExistence type="evidence at protein level"/>
<keyword id="KW-0963">Cytoplasm</keyword>
<keyword id="KW-0206">Cytoskeleton</keyword>
<keyword id="KW-0342">GTP-binding</keyword>
<keyword id="KW-0493">Microtubule</keyword>
<keyword id="KW-0547">Nucleotide-binding</keyword>
<keyword id="KW-1267">Proteomics identification</keyword>
<keyword id="KW-1185">Reference proteome</keyword>
<accession>Q9UJT0</accession>
<accession>Q5H8W8</accession>
<accession>Q8NEG3</accession>
<sequence length="475" mass="52932">MTQSVVVQVGQCGNQIGCCFWDLALREHAAVNQKGIYDEAISSFFRNVDTRVVGDGGSISKGKICSLKARAVLIDMEEGVVNEILQGPLRDVFDTKQLITDISGSGNNWAVGHKVFGSLYQDQILEKFRKSAEHCDCLQCFFIIHSMGGGTGSGLGTFLLKVLEDEFPEVYRFVTSIYPSGEDDVITSPYNSILAMKELNEHADCVLPIDNQSLFDIISKIDLMVNSGKLGTTVKPKSLVTSSSGALKKQHKKPFDAMNNIVANLLLNLTSSARFEGSLNMDLNEISMNLVPFPQLHYLVSSLTPLYTLTDVNIPPRRLDQMFSDAFSKDHQLLRADPKHSLYLACALMVRGNVQISDLRRNIERLKPSLQFVSWNQEGWKTSLCSVPPVGHSHSLLALANNTCVKPTFMELKERFMRLYKKKAHLHHYLQVEGMEESCFTEAVSSLSALIQEYDQLDATKNMPVQDLPRLSIAM</sequence>
<comment type="subunit">
    <text evidence="1">Found in a complex with TEDC1, TEDC2, TUBE1 and TUBD1.</text>
</comment>
<comment type="subcellular location">
    <subcellularLocation>
        <location evidence="3">Cytoplasm</location>
        <location evidence="3">Cytoskeleton</location>
        <location evidence="3">Microtubule organizing center</location>
        <location evidence="3">Centrosome</location>
    </subcellularLocation>
    <text evidence="3">Associated with pericentriolar material.</text>
</comment>
<comment type="similarity">
    <text evidence="4">Belongs to the tubulin family.</text>
</comment>
<organism>
    <name type="scientific">Homo sapiens</name>
    <name type="common">Human</name>
    <dbReference type="NCBI Taxonomy" id="9606"/>
    <lineage>
        <taxon>Eukaryota</taxon>
        <taxon>Metazoa</taxon>
        <taxon>Chordata</taxon>
        <taxon>Craniata</taxon>
        <taxon>Vertebrata</taxon>
        <taxon>Euteleostomi</taxon>
        <taxon>Mammalia</taxon>
        <taxon>Eutheria</taxon>
        <taxon>Euarchontoglires</taxon>
        <taxon>Primates</taxon>
        <taxon>Haplorrhini</taxon>
        <taxon>Catarrhini</taxon>
        <taxon>Hominidae</taxon>
        <taxon>Homo</taxon>
    </lineage>
</organism>
<reference key="1">
    <citation type="journal article" date="2000" name="Nat. Cell Biol.">
        <title>Delta-tubulin and epsilon-tubulin: two new human centrosomal tubulins reveal new aspects of centrosome structure and function.</title>
        <authorList>
            <person name="Chang P."/>
            <person name="Stearns T."/>
        </authorList>
    </citation>
    <scope>NUCLEOTIDE SEQUENCE [MRNA]</scope>
    <scope>SUBCELLULAR LOCATION</scope>
</reference>
<reference key="2">
    <citation type="journal article" date="2003" name="Nature">
        <title>The DNA sequence and analysis of human chromosome 6.</title>
        <authorList>
            <person name="Mungall A.J."/>
            <person name="Palmer S.A."/>
            <person name="Sims S.K."/>
            <person name="Edwards C.A."/>
            <person name="Ashurst J.L."/>
            <person name="Wilming L."/>
            <person name="Jones M.C."/>
            <person name="Horton R."/>
            <person name="Hunt S.E."/>
            <person name="Scott C.E."/>
            <person name="Gilbert J.G.R."/>
            <person name="Clamp M.E."/>
            <person name="Bethel G."/>
            <person name="Milne S."/>
            <person name="Ainscough R."/>
            <person name="Almeida J.P."/>
            <person name="Ambrose K.D."/>
            <person name="Andrews T.D."/>
            <person name="Ashwell R.I.S."/>
            <person name="Babbage A.K."/>
            <person name="Bagguley C.L."/>
            <person name="Bailey J."/>
            <person name="Banerjee R."/>
            <person name="Barker D.J."/>
            <person name="Barlow K.F."/>
            <person name="Bates K."/>
            <person name="Beare D.M."/>
            <person name="Beasley H."/>
            <person name="Beasley O."/>
            <person name="Bird C.P."/>
            <person name="Blakey S.E."/>
            <person name="Bray-Allen S."/>
            <person name="Brook J."/>
            <person name="Brown A.J."/>
            <person name="Brown J.Y."/>
            <person name="Burford D.C."/>
            <person name="Burrill W."/>
            <person name="Burton J."/>
            <person name="Carder C."/>
            <person name="Carter N.P."/>
            <person name="Chapman J.C."/>
            <person name="Clark S.Y."/>
            <person name="Clark G."/>
            <person name="Clee C.M."/>
            <person name="Clegg S."/>
            <person name="Cobley V."/>
            <person name="Collier R.E."/>
            <person name="Collins J.E."/>
            <person name="Colman L.K."/>
            <person name="Corby N.R."/>
            <person name="Coville G.J."/>
            <person name="Culley K.M."/>
            <person name="Dhami P."/>
            <person name="Davies J."/>
            <person name="Dunn M."/>
            <person name="Earthrowl M.E."/>
            <person name="Ellington A.E."/>
            <person name="Evans K.A."/>
            <person name="Faulkner L."/>
            <person name="Francis M.D."/>
            <person name="Frankish A."/>
            <person name="Frankland J."/>
            <person name="French L."/>
            <person name="Garner P."/>
            <person name="Garnett J."/>
            <person name="Ghori M.J."/>
            <person name="Gilby L.M."/>
            <person name="Gillson C.J."/>
            <person name="Glithero R.J."/>
            <person name="Grafham D.V."/>
            <person name="Grant M."/>
            <person name="Gribble S."/>
            <person name="Griffiths C."/>
            <person name="Griffiths M.N.D."/>
            <person name="Hall R."/>
            <person name="Halls K.S."/>
            <person name="Hammond S."/>
            <person name="Harley J.L."/>
            <person name="Hart E.A."/>
            <person name="Heath P.D."/>
            <person name="Heathcott R."/>
            <person name="Holmes S.J."/>
            <person name="Howden P.J."/>
            <person name="Howe K.L."/>
            <person name="Howell G.R."/>
            <person name="Huckle E."/>
            <person name="Humphray S.J."/>
            <person name="Humphries M.D."/>
            <person name="Hunt A.R."/>
            <person name="Johnson C.M."/>
            <person name="Joy A.A."/>
            <person name="Kay M."/>
            <person name="Keenan S.J."/>
            <person name="Kimberley A.M."/>
            <person name="King A."/>
            <person name="Laird G.K."/>
            <person name="Langford C."/>
            <person name="Lawlor S."/>
            <person name="Leongamornlert D.A."/>
            <person name="Leversha M."/>
            <person name="Lloyd C.R."/>
            <person name="Lloyd D.M."/>
            <person name="Loveland J.E."/>
            <person name="Lovell J."/>
            <person name="Martin S."/>
            <person name="Mashreghi-Mohammadi M."/>
            <person name="Maslen G.L."/>
            <person name="Matthews L."/>
            <person name="McCann O.T."/>
            <person name="McLaren S.J."/>
            <person name="McLay K."/>
            <person name="McMurray A."/>
            <person name="Moore M.J.F."/>
            <person name="Mullikin J.C."/>
            <person name="Niblett D."/>
            <person name="Nickerson T."/>
            <person name="Novik K.L."/>
            <person name="Oliver K."/>
            <person name="Overton-Larty E.K."/>
            <person name="Parker A."/>
            <person name="Patel R."/>
            <person name="Pearce A.V."/>
            <person name="Peck A.I."/>
            <person name="Phillimore B.J.C.T."/>
            <person name="Phillips S."/>
            <person name="Plumb R.W."/>
            <person name="Porter K.M."/>
            <person name="Ramsey Y."/>
            <person name="Ranby S.A."/>
            <person name="Rice C.M."/>
            <person name="Ross M.T."/>
            <person name="Searle S.M."/>
            <person name="Sehra H.K."/>
            <person name="Sheridan E."/>
            <person name="Skuce C.D."/>
            <person name="Smith S."/>
            <person name="Smith M."/>
            <person name="Spraggon L."/>
            <person name="Squares S.L."/>
            <person name="Steward C.A."/>
            <person name="Sycamore N."/>
            <person name="Tamlyn-Hall G."/>
            <person name="Tester J."/>
            <person name="Theaker A.J."/>
            <person name="Thomas D.W."/>
            <person name="Thorpe A."/>
            <person name="Tracey A."/>
            <person name="Tromans A."/>
            <person name="Tubby B."/>
            <person name="Wall M."/>
            <person name="Wallis J.M."/>
            <person name="West A.P."/>
            <person name="White S.S."/>
            <person name="Whitehead S.L."/>
            <person name="Whittaker H."/>
            <person name="Wild A."/>
            <person name="Willey D.J."/>
            <person name="Wilmer T.E."/>
            <person name="Wood J.M."/>
            <person name="Wray P.W."/>
            <person name="Wyatt J.C."/>
            <person name="Young L."/>
            <person name="Younger R.M."/>
            <person name="Bentley D.R."/>
            <person name="Coulson A."/>
            <person name="Durbin R.M."/>
            <person name="Hubbard T."/>
            <person name="Sulston J.E."/>
            <person name="Dunham I."/>
            <person name="Rogers J."/>
            <person name="Beck S."/>
        </authorList>
    </citation>
    <scope>NUCLEOTIDE SEQUENCE [LARGE SCALE GENOMIC DNA]</scope>
</reference>
<reference key="3">
    <citation type="submission" date="2005-09" db="EMBL/GenBank/DDBJ databases">
        <authorList>
            <person name="Mural R.J."/>
            <person name="Istrail S."/>
            <person name="Sutton G.G."/>
            <person name="Florea L."/>
            <person name="Halpern A.L."/>
            <person name="Mobarry C.M."/>
            <person name="Lippert R."/>
            <person name="Walenz B."/>
            <person name="Shatkay H."/>
            <person name="Dew I."/>
            <person name="Miller J.R."/>
            <person name="Flanigan M.J."/>
            <person name="Edwards N.J."/>
            <person name="Bolanos R."/>
            <person name="Fasulo D."/>
            <person name="Halldorsson B.V."/>
            <person name="Hannenhalli S."/>
            <person name="Turner R."/>
            <person name="Yooseph S."/>
            <person name="Lu F."/>
            <person name="Nusskern D.R."/>
            <person name="Shue B.C."/>
            <person name="Zheng X.H."/>
            <person name="Zhong F."/>
            <person name="Delcher A.L."/>
            <person name="Huson D.H."/>
            <person name="Kravitz S.A."/>
            <person name="Mouchard L."/>
            <person name="Reinert K."/>
            <person name="Remington K.A."/>
            <person name="Clark A.G."/>
            <person name="Waterman M.S."/>
            <person name="Eichler E.E."/>
            <person name="Adams M.D."/>
            <person name="Hunkapiller M.W."/>
            <person name="Myers E.W."/>
            <person name="Venter J.C."/>
        </authorList>
    </citation>
    <scope>NUCLEOTIDE SEQUENCE [LARGE SCALE GENOMIC DNA]</scope>
</reference>
<reference key="4">
    <citation type="journal article" date="2004" name="Genome Res.">
        <title>The status, quality, and expansion of the NIH full-length cDNA project: the Mammalian Gene Collection (MGC).</title>
        <authorList>
            <consortium name="The MGC Project Team"/>
        </authorList>
    </citation>
    <scope>NUCLEOTIDE SEQUENCE [LARGE SCALE MRNA]</scope>
    <source>
        <tissue>Testis</tissue>
    </source>
</reference>
<gene>
    <name type="primary">TUBE1</name>
    <name type="synonym">TUBE</name>
</gene>
<name>TBE_HUMAN</name>